<name>SYR_BURMS</name>
<reference key="1">
    <citation type="journal article" date="2010" name="Genome Biol. Evol.">
        <title>Continuing evolution of Burkholderia mallei through genome reduction and large-scale rearrangements.</title>
        <authorList>
            <person name="Losada L."/>
            <person name="Ronning C.M."/>
            <person name="DeShazer D."/>
            <person name="Woods D."/>
            <person name="Fedorova N."/>
            <person name="Kim H.S."/>
            <person name="Shabalina S.A."/>
            <person name="Pearson T.R."/>
            <person name="Brinkac L."/>
            <person name="Tan P."/>
            <person name="Nandi T."/>
            <person name="Crabtree J."/>
            <person name="Badger J."/>
            <person name="Beckstrom-Sternberg S."/>
            <person name="Saqib M."/>
            <person name="Schutzer S.E."/>
            <person name="Keim P."/>
            <person name="Nierman W.C."/>
        </authorList>
    </citation>
    <scope>NUCLEOTIDE SEQUENCE [LARGE SCALE GENOMIC DNA]</scope>
    <source>
        <strain>SAVP1</strain>
    </source>
</reference>
<evidence type="ECO:0000255" key="1">
    <source>
        <dbReference type="HAMAP-Rule" id="MF_00123"/>
    </source>
</evidence>
<sequence length="594" mass="64578">MLPAQKHTLETLLENSVKQVVQASKGDADAAFVLPAIALERPKVAAHGDVACNVALQLAKPLGANPRQLAEQIVAALTAQPEAAGLVDAAEIAGPGFINLRLTPASKQAVIGAVLAQGRAFGASERDHDKRVLLEFVSANPTGPLHVGHGRQAALGDALANVLASQGYAVHREFYYNDAGVQIGNLAISTQARARGLKPGDAGWPEAAYNGEYIADIARDYLNGETVAASDGEPVTGKRDVEDLEAIRKFAVTYLRREQDMDLKAFGVKFDQYYLESSLYTEGRVEKTVDALIAAGMTYEQEGALWLRTTDEGDDKDRVMRKTDGTYTYFVPDVAYHVTKWERGFTKVINIQGSDHHGTIARVRAGLQGLHIGIPKGYPDYVLHKMVTVMRDGQEVKISKRAGSYVTVRDLIEWSGGATPGSEGSPELLDEATITRGRDAVRFFLISRKADTEFVFDIDLALKQNDENPVYYVQYAHARICSVINEWKSRYGATDALLPGADLSPLDSKQAMALMQKLAEYPDVLAHAAGELAPHAVAFYLRELASEFHSFYNAERVLVDEQAPRTARVALLAATRQVLENGLAMLGVSAPSKM</sequence>
<gene>
    <name evidence="1" type="primary">argS</name>
    <name type="ordered locus">BMASAVP1_A3099</name>
</gene>
<proteinExistence type="inferred from homology"/>
<accession>A1V839</accession>
<protein>
    <recommendedName>
        <fullName evidence="1">Arginine--tRNA ligase</fullName>
        <ecNumber evidence="1">6.1.1.19</ecNumber>
    </recommendedName>
    <alternativeName>
        <fullName evidence="1">Arginyl-tRNA synthetase</fullName>
        <shortName evidence="1">ArgRS</shortName>
    </alternativeName>
</protein>
<feature type="chain" id="PRO_1000018002" description="Arginine--tRNA ligase">
    <location>
        <begin position="1"/>
        <end position="594"/>
    </location>
</feature>
<feature type="short sequence motif" description="'HIGH' region">
    <location>
        <begin position="139"/>
        <end position="149"/>
    </location>
</feature>
<keyword id="KW-0030">Aminoacyl-tRNA synthetase</keyword>
<keyword id="KW-0067">ATP-binding</keyword>
<keyword id="KW-0963">Cytoplasm</keyword>
<keyword id="KW-0436">Ligase</keyword>
<keyword id="KW-0547">Nucleotide-binding</keyword>
<keyword id="KW-0648">Protein biosynthesis</keyword>
<comment type="catalytic activity">
    <reaction evidence="1">
        <text>tRNA(Arg) + L-arginine + ATP = L-arginyl-tRNA(Arg) + AMP + diphosphate</text>
        <dbReference type="Rhea" id="RHEA:20301"/>
        <dbReference type="Rhea" id="RHEA-COMP:9658"/>
        <dbReference type="Rhea" id="RHEA-COMP:9673"/>
        <dbReference type="ChEBI" id="CHEBI:30616"/>
        <dbReference type="ChEBI" id="CHEBI:32682"/>
        <dbReference type="ChEBI" id="CHEBI:33019"/>
        <dbReference type="ChEBI" id="CHEBI:78442"/>
        <dbReference type="ChEBI" id="CHEBI:78513"/>
        <dbReference type="ChEBI" id="CHEBI:456215"/>
        <dbReference type="EC" id="6.1.1.19"/>
    </reaction>
</comment>
<comment type="subunit">
    <text evidence="1">Monomer.</text>
</comment>
<comment type="subcellular location">
    <subcellularLocation>
        <location evidence="1">Cytoplasm</location>
    </subcellularLocation>
</comment>
<comment type="similarity">
    <text evidence="1">Belongs to the class-I aminoacyl-tRNA synthetase family.</text>
</comment>
<organism>
    <name type="scientific">Burkholderia mallei (strain SAVP1)</name>
    <dbReference type="NCBI Taxonomy" id="320388"/>
    <lineage>
        <taxon>Bacteria</taxon>
        <taxon>Pseudomonadati</taxon>
        <taxon>Pseudomonadota</taxon>
        <taxon>Betaproteobacteria</taxon>
        <taxon>Burkholderiales</taxon>
        <taxon>Burkholderiaceae</taxon>
        <taxon>Burkholderia</taxon>
        <taxon>pseudomallei group</taxon>
    </lineage>
</organism>
<dbReference type="EC" id="6.1.1.19" evidence="1"/>
<dbReference type="EMBL" id="CP000526">
    <property type="protein sequence ID" value="ABM52591.1"/>
    <property type="molecule type" value="Genomic_DNA"/>
</dbReference>
<dbReference type="RefSeq" id="WP_004189649.1">
    <property type="nucleotide sequence ID" value="NC_008785.1"/>
</dbReference>
<dbReference type="SMR" id="A1V839"/>
<dbReference type="GeneID" id="92977866"/>
<dbReference type="KEGG" id="bmv:BMASAVP1_A3099"/>
<dbReference type="HOGENOM" id="CLU_006406_0_1_4"/>
<dbReference type="GO" id="GO:0005737">
    <property type="term" value="C:cytoplasm"/>
    <property type="evidence" value="ECO:0007669"/>
    <property type="project" value="UniProtKB-SubCell"/>
</dbReference>
<dbReference type="GO" id="GO:0004814">
    <property type="term" value="F:arginine-tRNA ligase activity"/>
    <property type="evidence" value="ECO:0007669"/>
    <property type="project" value="UniProtKB-UniRule"/>
</dbReference>
<dbReference type="GO" id="GO:0005524">
    <property type="term" value="F:ATP binding"/>
    <property type="evidence" value="ECO:0007669"/>
    <property type="project" value="UniProtKB-UniRule"/>
</dbReference>
<dbReference type="GO" id="GO:0006420">
    <property type="term" value="P:arginyl-tRNA aminoacylation"/>
    <property type="evidence" value="ECO:0007669"/>
    <property type="project" value="UniProtKB-UniRule"/>
</dbReference>
<dbReference type="CDD" id="cd07956">
    <property type="entry name" value="Anticodon_Ia_Arg"/>
    <property type="match status" value="1"/>
</dbReference>
<dbReference type="CDD" id="cd00671">
    <property type="entry name" value="ArgRS_core"/>
    <property type="match status" value="1"/>
</dbReference>
<dbReference type="FunFam" id="1.10.730.10:FF:000008">
    <property type="entry name" value="Arginine--tRNA ligase"/>
    <property type="match status" value="1"/>
</dbReference>
<dbReference type="FunFam" id="3.40.50.620:FF:000062">
    <property type="entry name" value="Arginine--tRNA ligase"/>
    <property type="match status" value="1"/>
</dbReference>
<dbReference type="Gene3D" id="3.30.1360.70">
    <property type="entry name" value="Arginyl tRNA synthetase N-terminal domain"/>
    <property type="match status" value="1"/>
</dbReference>
<dbReference type="Gene3D" id="3.40.50.620">
    <property type="entry name" value="HUPs"/>
    <property type="match status" value="1"/>
</dbReference>
<dbReference type="Gene3D" id="1.10.730.10">
    <property type="entry name" value="Isoleucyl-tRNA Synthetase, Domain 1"/>
    <property type="match status" value="1"/>
</dbReference>
<dbReference type="HAMAP" id="MF_00123">
    <property type="entry name" value="Arg_tRNA_synth"/>
    <property type="match status" value="1"/>
</dbReference>
<dbReference type="InterPro" id="IPR001412">
    <property type="entry name" value="aa-tRNA-synth_I_CS"/>
</dbReference>
<dbReference type="InterPro" id="IPR001278">
    <property type="entry name" value="Arg-tRNA-ligase"/>
</dbReference>
<dbReference type="InterPro" id="IPR005148">
    <property type="entry name" value="Arg-tRNA-synth_N"/>
</dbReference>
<dbReference type="InterPro" id="IPR036695">
    <property type="entry name" value="Arg-tRNA-synth_N_sf"/>
</dbReference>
<dbReference type="InterPro" id="IPR035684">
    <property type="entry name" value="ArgRS_core"/>
</dbReference>
<dbReference type="InterPro" id="IPR008909">
    <property type="entry name" value="DALR_anticod-bd"/>
</dbReference>
<dbReference type="InterPro" id="IPR014729">
    <property type="entry name" value="Rossmann-like_a/b/a_fold"/>
</dbReference>
<dbReference type="InterPro" id="IPR009080">
    <property type="entry name" value="tRNAsynth_Ia_anticodon-bd"/>
</dbReference>
<dbReference type="NCBIfam" id="TIGR00456">
    <property type="entry name" value="argS"/>
    <property type="match status" value="1"/>
</dbReference>
<dbReference type="PANTHER" id="PTHR11956:SF5">
    <property type="entry name" value="ARGININE--TRNA LIGASE, CYTOPLASMIC"/>
    <property type="match status" value="1"/>
</dbReference>
<dbReference type="PANTHER" id="PTHR11956">
    <property type="entry name" value="ARGINYL-TRNA SYNTHETASE"/>
    <property type="match status" value="1"/>
</dbReference>
<dbReference type="Pfam" id="PF03485">
    <property type="entry name" value="Arg_tRNA_synt_N"/>
    <property type="match status" value="1"/>
</dbReference>
<dbReference type="Pfam" id="PF05746">
    <property type="entry name" value="DALR_1"/>
    <property type="match status" value="1"/>
</dbReference>
<dbReference type="Pfam" id="PF00750">
    <property type="entry name" value="tRNA-synt_1d"/>
    <property type="match status" value="1"/>
</dbReference>
<dbReference type="PRINTS" id="PR01038">
    <property type="entry name" value="TRNASYNTHARG"/>
</dbReference>
<dbReference type="SMART" id="SM01016">
    <property type="entry name" value="Arg_tRNA_synt_N"/>
    <property type="match status" value="1"/>
</dbReference>
<dbReference type="SMART" id="SM00836">
    <property type="entry name" value="DALR_1"/>
    <property type="match status" value="1"/>
</dbReference>
<dbReference type="SUPFAM" id="SSF47323">
    <property type="entry name" value="Anticodon-binding domain of a subclass of class I aminoacyl-tRNA synthetases"/>
    <property type="match status" value="1"/>
</dbReference>
<dbReference type="SUPFAM" id="SSF55190">
    <property type="entry name" value="Arginyl-tRNA synthetase (ArgRS), N-terminal 'additional' domain"/>
    <property type="match status" value="1"/>
</dbReference>
<dbReference type="SUPFAM" id="SSF52374">
    <property type="entry name" value="Nucleotidylyl transferase"/>
    <property type="match status" value="1"/>
</dbReference>
<dbReference type="PROSITE" id="PS00178">
    <property type="entry name" value="AA_TRNA_LIGASE_I"/>
    <property type="match status" value="1"/>
</dbReference>